<dbReference type="EMBL" id="CP000117">
    <property type="protein sequence ID" value="ABA21623.1"/>
    <property type="molecule type" value="Genomic_DNA"/>
</dbReference>
<dbReference type="SMR" id="Q3MBL3"/>
<dbReference type="STRING" id="240292.Ava_2001"/>
<dbReference type="KEGG" id="ava:Ava_2001"/>
<dbReference type="eggNOG" id="COG1666">
    <property type="taxonomic scope" value="Bacteria"/>
</dbReference>
<dbReference type="HOGENOM" id="CLU_099839_0_0_3"/>
<dbReference type="Proteomes" id="UP000002533">
    <property type="component" value="Chromosome"/>
</dbReference>
<dbReference type="GO" id="GO:0005829">
    <property type="term" value="C:cytosol"/>
    <property type="evidence" value="ECO:0007669"/>
    <property type="project" value="TreeGrafter"/>
</dbReference>
<dbReference type="GO" id="GO:0000166">
    <property type="term" value="F:nucleotide binding"/>
    <property type="evidence" value="ECO:0007669"/>
    <property type="project" value="TreeGrafter"/>
</dbReference>
<dbReference type="CDD" id="cd11740">
    <property type="entry name" value="YajQ_like"/>
    <property type="match status" value="1"/>
</dbReference>
<dbReference type="Gene3D" id="3.30.70.860">
    <property type="match status" value="1"/>
</dbReference>
<dbReference type="Gene3D" id="3.30.70.990">
    <property type="entry name" value="YajQ-like, domain 2"/>
    <property type="match status" value="1"/>
</dbReference>
<dbReference type="HAMAP" id="MF_00632">
    <property type="entry name" value="YajQ"/>
    <property type="match status" value="1"/>
</dbReference>
<dbReference type="InterPro" id="IPR007551">
    <property type="entry name" value="DUF520"/>
</dbReference>
<dbReference type="InterPro" id="IPR035571">
    <property type="entry name" value="UPF0234-like_C"/>
</dbReference>
<dbReference type="InterPro" id="IPR035570">
    <property type="entry name" value="UPF0234_N"/>
</dbReference>
<dbReference type="InterPro" id="IPR036183">
    <property type="entry name" value="YajQ-like_sf"/>
</dbReference>
<dbReference type="NCBIfam" id="NF003819">
    <property type="entry name" value="PRK05412.1"/>
    <property type="match status" value="1"/>
</dbReference>
<dbReference type="PANTHER" id="PTHR30476">
    <property type="entry name" value="UPF0234 PROTEIN YAJQ"/>
    <property type="match status" value="1"/>
</dbReference>
<dbReference type="PANTHER" id="PTHR30476:SF0">
    <property type="entry name" value="UPF0234 PROTEIN YAJQ"/>
    <property type="match status" value="1"/>
</dbReference>
<dbReference type="Pfam" id="PF04461">
    <property type="entry name" value="DUF520"/>
    <property type="match status" value="1"/>
</dbReference>
<dbReference type="SUPFAM" id="SSF89963">
    <property type="entry name" value="YajQ-like"/>
    <property type="match status" value="2"/>
</dbReference>
<keyword id="KW-0547">Nucleotide-binding</keyword>
<comment type="function">
    <text evidence="1">Nucleotide-binding protein.</text>
</comment>
<comment type="similarity">
    <text evidence="1">Belongs to the YajQ family.</text>
</comment>
<proteinExistence type="inferred from homology"/>
<organism>
    <name type="scientific">Trichormus variabilis (strain ATCC 29413 / PCC 7937)</name>
    <name type="common">Anabaena variabilis</name>
    <dbReference type="NCBI Taxonomy" id="240292"/>
    <lineage>
        <taxon>Bacteria</taxon>
        <taxon>Bacillati</taxon>
        <taxon>Cyanobacteriota</taxon>
        <taxon>Cyanophyceae</taxon>
        <taxon>Nostocales</taxon>
        <taxon>Nostocaceae</taxon>
        <taxon>Trichormus</taxon>
    </lineage>
</organism>
<protein>
    <recommendedName>
        <fullName evidence="1">Nucleotide-binding protein Ava_2001</fullName>
    </recommendedName>
</protein>
<sequence>MASTYSFDIVSDFDRQELVNAVDQVIRDLKSRYDLKDTQTTVELGEEKITIGTDSEFTLESVHNILREKAAKRNLSQKIFDFGKVESASGNRVRQEITLKKGISQDIAKQISKLIRDEFKKVQASIQGDAVRVSAKAKDDLQTVIQRLKQEDYPVALQFTNYR</sequence>
<gene>
    <name type="ordered locus">Ava_2001</name>
</gene>
<evidence type="ECO:0000255" key="1">
    <source>
        <dbReference type="HAMAP-Rule" id="MF_00632"/>
    </source>
</evidence>
<reference key="1">
    <citation type="journal article" date="2014" name="Stand. Genomic Sci.">
        <title>Complete genome sequence of Anabaena variabilis ATCC 29413.</title>
        <authorList>
            <person name="Thiel T."/>
            <person name="Pratte B.S."/>
            <person name="Zhong J."/>
            <person name="Goodwin L."/>
            <person name="Copeland A."/>
            <person name="Lucas S."/>
            <person name="Han C."/>
            <person name="Pitluck S."/>
            <person name="Land M.L."/>
            <person name="Kyrpides N.C."/>
            <person name="Woyke T."/>
        </authorList>
    </citation>
    <scope>NUCLEOTIDE SEQUENCE [LARGE SCALE GENOMIC DNA]</scope>
    <source>
        <strain>ATCC 29413 / PCC 7937</strain>
    </source>
</reference>
<accession>Q3MBL3</accession>
<feature type="chain" id="PRO_0000261912" description="Nucleotide-binding protein Ava_2001">
    <location>
        <begin position="1"/>
        <end position="163"/>
    </location>
</feature>
<name>Y2001_TRIV2</name>